<reference key="1">
    <citation type="journal article" date="1998" name="Mol. Biochem. Parasitol.">
        <title>A divergent multi-domain cyclophilin is highly conserved between parasitic and free-living nematode species and is important in larval muscle development.</title>
        <authorList>
            <person name="Page A.P."/>
            <person name="Winter A.D."/>
        </authorList>
    </citation>
    <scope>NUCLEOTIDE SEQUENCE [MRNA]</scope>
    <scope>FUNCTION</scope>
    <scope>TISSUE SPECIFICITY</scope>
    <scope>DEVELOPMENTAL STAGE</scope>
    <source>
        <strain>Bristol N2</strain>
    </source>
</reference>
<reference key="2">
    <citation type="journal article" date="1996" name="Biochem. J.">
        <title>Cloning and biochemical characterization of the cyclophilin homologues from the free-living nematode Caenorhabditis elegans.</title>
        <authorList>
            <person name="Page A.P."/>
            <person name="Macniven K."/>
            <person name="Hengartner M.O."/>
        </authorList>
    </citation>
    <scope>NUCLEOTIDE SEQUENCE [MRNA] OF 255-435</scope>
    <source>
        <strain>Bristol N2</strain>
    </source>
</reference>
<reference key="3">
    <citation type="submission" date="2001-09" db="EMBL/GenBank/DDBJ databases">
        <title>The sex determination gene mog-6 codes for a cyclophilin that interacts with MEP-1 in C. elegans.</title>
        <authorList>
            <person name="Pugnale P."/>
            <person name="Puoti A."/>
        </authorList>
    </citation>
    <scope>NUCLEOTIDE SEQUENCE [MRNA]</scope>
</reference>
<reference key="4">
    <citation type="journal article" date="1998" name="Science">
        <title>Genome sequence of the nematode C. elegans: a platform for investigating biology.</title>
        <authorList>
            <consortium name="The C. elegans sequencing consortium"/>
        </authorList>
    </citation>
    <scope>NUCLEOTIDE SEQUENCE [LARGE SCALE GENOMIC DNA]</scope>
    <source>
        <strain>Bristol N2</strain>
    </source>
</reference>
<reference key="5">
    <citation type="journal article" date="1993" name="Dev. Genet.">
        <title>More mog genes that influence the switch from spermatogenesis to oogenesis in the hermaphrodite germ line of Caenorhabditis elegans.</title>
        <authorList>
            <person name="Graham P.L."/>
            <person name="Schedl T."/>
            <person name="Kimble J."/>
        </authorList>
    </citation>
    <scope>FUNCTION</scope>
</reference>
<dbReference type="EC" id="2.3.2.27" evidence="3"/>
<dbReference type="EC" id="5.2.1.8" evidence="1"/>
<dbReference type="EMBL" id="U36187">
    <property type="protein sequence ID" value="AAC06337.1"/>
    <property type="molecule type" value="mRNA"/>
</dbReference>
<dbReference type="EMBL" id="AF421146">
    <property type="protein sequence ID" value="AAL27008.1"/>
    <property type="molecule type" value="mRNA"/>
</dbReference>
<dbReference type="EMBL" id="Z36949">
    <property type="protein sequence ID" value="CAA85417.1"/>
    <property type="molecule type" value="Genomic_DNA"/>
</dbReference>
<dbReference type="EMBL" id="Z46935">
    <property type="protein sequence ID" value="CAA85417.1"/>
    <property type="status" value="JOINED"/>
    <property type="molecule type" value="Genomic_DNA"/>
</dbReference>
<dbReference type="PIR" id="T23003">
    <property type="entry name" value="T23003"/>
</dbReference>
<dbReference type="RefSeq" id="NP_496337.1">
    <property type="nucleotide sequence ID" value="NM_063936.7"/>
</dbReference>
<dbReference type="SMR" id="P52012"/>
<dbReference type="BioGRID" id="39984">
    <property type="interactions" value="6"/>
</dbReference>
<dbReference type="FunCoup" id="P52012">
    <property type="interactions" value="2659"/>
</dbReference>
<dbReference type="IntAct" id="P52012">
    <property type="interactions" value="1"/>
</dbReference>
<dbReference type="STRING" id="6239.F59E10.2.1"/>
<dbReference type="PaxDb" id="6239-F59E10.2"/>
<dbReference type="PeptideAtlas" id="P52012"/>
<dbReference type="EnsemblMetazoa" id="F59E10.2.1">
    <property type="protein sequence ID" value="F59E10.2.1"/>
    <property type="gene ID" value="WBGene00000880"/>
</dbReference>
<dbReference type="GeneID" id="174674"/>
<dbReference type="KEGG" id="cel:CELE_F59E10.2"/>
<dbReference type="UCSC" id="F59E10.2.1">
    <property type="organism name" value="c. elegans"/>
</dbReference>
<dbReference type="AGR" id="WB:WBGene00000880"/>
<dbReference type="CTD" id="174674"/>
<dbReference type="WormBase" id="F59E10.2">
    <property type="protein sequence ID" value="CE01596"/>
    <property type="gene ID" value="WBGene00000880"/>
    <property type="gene designation" value="cyn-4"/>
</dbReference>
<dbReference type="eggNOG" id="KOG0883">
    <property type="taxonomic scope" value="Eukaryota"/>
</dbReference>
<dbReference type="GeneTree" id="ENSGT00940000153189"/>
<dbReference type="HOGENOM" id="CLU_012062_7_0_1"/>
<dbReference type="InParanoid" id="P52012"/>
<dbReference type="OMA" id="NFIKHCA"/>
<dbReference type="OrthoDB" id="30774at2759"/>
<dbReference type="PhylomeDB" id="P52012"/>
<dbReference type="Reactome" id="R-CEL-210991">
    <property type="pathway name" value="Basigin interactions"/>
</dbReference>
<dbReference type="Reactome" id="R-CEL-72163">
    <property type="pathway name" value="mRNA Splicing - Major Pathway"/>
</dbReference>
<dbReference type="UniPathway" id="UPA00143"/>
<dbReference type="PRO" id="PR:P52012"/>
<dbReference type="Proteomes" id="UP000001940">
    <property type="component" value="Chromosome II"/>
</dbReference>
<dbReference type="Bgee" id="WBGene00000880">
    <property type="expression patterns" value="Expressed in embryo and 4 other cell types or tissues"/>
</dbReference>
<dbReference type="GO" id="GO:0071013">
    <property type="term" value="C:catalytic step 2 spliceosome"/>
    <property type="evidence" value="ECO:0000318"/>
    <property type="project" value="GO_Central"/>
</dbReference>
<dbReference type="GO" id="GO:0003755">
    <property type="term" value="F:peptidyl-prolyl cis-trans isomerase activity"/>
    <property type="evidence" value="ECO:0007669"/>
    <property type="project" value="UniProtKB-KW"/>
</dbReference>
<dbReference type="GO" id="GO:0061630">
    <property type="term" value="F:ubiquitin protein ligase activity"/>
    <property type="evidence" value="ECO:0000318"/>
    <property type="project" value="GO_Central"/>
</dbReference>
<dbReference type="GO" id="GO:0030154">
    <property type="term" value="P:cell differentiation"/>
    <property type="evidence" value="ECO:0007669"/>
    <property type="project" value="UniProtKB-KW"/>
</dbReference>
<dbReference type="GO" id="GO:0040022">
    <property type="term" value="P:feminization of hermaphroditic germ-line"/>
    <property type="evidence" value="ECO:0000315"/>
    <property type="project" value="WormBase"/>
</dbReference>
<dbReference type="GO" id="GO:0006457">
    <property type="term" value="P:protein folding"/>
    <property type="evidence" value="ECO:0000318"/>
    <property type="project" value="GO_Central"/>
</dbReference>
<dbReference type="GO" id="GO:0016567">
    <property type="term" value="P:protein ubiquitination"/>
    <property type="evidence" value="ECO:0007669"/>
    <property type="project" value="UniProtKB-UniPathway"/>
</dbReference>
<dbReference type="GO" id="GO:0007548">
    <property type="term" value="P:sex differentiation"/>
    <property type="evidence" value="ECO:0007669"/>
    <property type="project" value="UniProtKB-KW"/>
</dbReference>
<dbReference type="CDD" id="cd01923">
    <property type="entry name" value="cyclophilin_RING"/>
    <property type="match status" value="1"/>
</dbReference>
<dbReference type="CDD" id="cd16663">
    <property type="entry name" value="RING-Ubox_PPIL2"/>
    <property type="match status" value="1"/>
</dbReference>
<dbReference type="FunFam" id="3.30.40.10:FF:000079">
    <property type="entry name" value="Peptidyl-prolyl cis-trans isomerase 2"/>
    <property type="match status" value="1"/>
</dbReference>
<dbReference type="FunFam" id="2.40.100.10:FF:000065">
    <property type="entry name" value="Peptidyl-prolyl cis-trans isomerase 4"/>
    <property type="match status" value="1"/>
</dbReference>
<dbReference type="Gene3D" id="2.40.100.10">
    <property type="entry name" value="Cyclophilin-like"/>
    <property type="match status" value="1"/>
</dbReference>
<dbReference type="Gene3D" id="3.30.40.10">
    <property type="entry name" value="Zinc/RING finger domain, C3HC4 (zinc finger)"/>
    <property type="match status" value="1"/>
</dbReference>
<dbReference type="InterPro" id="IPR029000">
    <property type="entry name" value="Cyclophilin-like_dom_sf"/>
</dbReference>
<dbReference type="InterPro" id="IPR020892">
    <property type="entry name" value="Cyclophilin-type_PPIase_CS"/>
</dbReference>
<dbReference type="InterPro" id="IPR002130">
    <property type="entry name" value="Cyclophilin-type_PPIase_dom"/>
</dbReference>
<dbReference type="InterPro" id="IPR044666">
    <property type="entry name" value="Cyclophilin_A-like"/>
</dbReference>
<dbReference type="InterPro" id="IPR026951">
    <property type="entry name" value="PPIL2_U-box_dom"/>
</dbReference>
<dbReference type="InterPro" id="IPR003613">
    <property type="entry name" value="Ubox_domain"/>
</dbReference>
<dbReference type="InterPro" id="IPR013083">
    <property type="entry name" value="Znf_RING/FYVE/PHD"/>
</dbReference>
<dbReference type="PANTHER" id="PTHR45625">
    <property type="entry name" value="PEPTIDYL-PROLYL CIS-TRANS ISOMERASE-RELATED"/>
    <property type="match status" value="1"/>
</dbReference>
<dbReference type="PANTHER" id="PTHR45625:SF1">
    <property type="entry name" value="RING-TYPE E3 UBIQUITIN-PROTEIN LIGASE PPIL2"/>
    <property type="match status" value="1"/>
</dbReference>
<dbReference type="Pfam" id="PF00160">
    <property type="entry name" value="Pro_isomerase"/>
    <property type="match status" value="1"/>
</dbReference>
<dbReference type="Pfam" id="PF04641">
    <property type="entry name" value="Rtf2"/>
    <property type="match status" value="1"/>
</dbReference>
<dbReference type="PRINTS" id="PR00153">
    <property type="entry name" value="CSAPPISMRASE"/>
</dbReference>
<dbReference type="SMART" id="SM00504">
    <property type="entry name" value="Ubox"/>
    <property type="match status" value="1"/>
</dbReference>
<dbReference type="SUPFAM" id="SSF50891">
    <property type="entry name" value="Cyclophilin-like"/>
    <property type="match status" value="1"/>
</dbReference>
<dbReference type="SUPFAM" id="SSF57850">
    <property type="entry name" value="RING/U-box"/>
    <property type="match status" value="1"/>
</dbReference>
<dbReference type="PROSITE" id="PS00170">
    <property type="entry name" value="CSA_PPIASE_1"/>
    <property type="match status" value="1"/>
</dbReference>
<dbReference type="PROSITE" id="PS50072">
    <property type="entry name" value="CSA_PPIASE_2"/>
    <property type="match status" value="1"/>
</dbReference>
<dbReference type="PROSITE" id="PS51698">
    <property type="entry name" value="U_BOX"/>
    <property type="match status" value="1"/>
</dbReference>
<organism>
    <name type="scientific">Caenorhabditis elegans</name>
    <dbReference type="NCBI Taxonomy" id="6239"/>
    <lineage>
        <taxon>Eukaryota</taxon>
        <taxon>Metazoa</taxon>
        <taxon>Ecdysozoa</taxon>
        <taxon>Nematoda</taxon>
        <taxon>Chromadorea</taxon>
        <taxon>Rhabditida</taxon>
        <taxon>Rhabditina</taxon>
        <taxon>Rhabditomorpha</taxon>
        <taxon>Rhabditoidea</taxon>
        <taxon>Rhabditidae</taxon>
        <taxon>Peloderinae</taxon>
        <taxon>Caenorhabditis</taxon>
    </lineage>
</organism>
<feature type="chain" id="PRO_0000064193" description="Peptidyl-prolyl cis-trans isomerase 4">
    <location>
        <begin position="1"/>
        <end position="523"/>
    </location>
</feature>
<feature type="domain" description="U-box">
    <location>
        <begin position="38"/>
        <end position="111"/>
    </location>
</feature>
<feature type="domain" description="PPIase cyclophilin-type" evidence="4">
    <location>
        <begin position="278"/>
        <end position="433"/>
    </location>
</feature>
<evidence type="ECO:0000250" key="1">
    <source>
        <dbReference type="UniProtKB" id="Q08752"/>
    </source>
</evidence>
<evidence type="ECO:0000250" key="2">
    <source>
        <dbReference type="UniProtKB" id="Q09928"/>
    </source>
</evidence>
<evidence type="ECO:0000250" key="3">
    <source>
        <dbReference type="UniProtKB" id="Q13356"/>
    </source>
</evidence>
<evidence type="ECO:0000255" key="4">
    <source>
        <dbReference type="PROSITE-ProRule" id="PRU00156"/>
    </source>
</evidence>
<evidence type="ECO:0000269" key="5">
    <source>
    </source>
</evidence>
<evidence type="ECO:0000269" key="6">
    <source>
    </source>
</evidence>
<evidence type="ECO:0000305" key="7"/>
<protein>
    <recommendedName>
        <fullName evidence="7">Peptidyl-prolyl cis-trans isomerase 4</fullName>
        <shortName>PPIase 4</shortName>
        <ecNumber evidence="3">2.3.2.27</ecNumber>
        <ecNumber evidence="1">5.2.1.8</ecNumber>
    </recommendedName>
    <alternativeName>
        <fullName>Cyclophilin mog-6</fullName>
    </alternativeName>
    <alternativeName>
        <fullName>Cyclophilin-4</fullName>
    </alternativeName>
    <alternativeName>
        <fullName>Masculinization of germline protein 6</fullName>
    </alternativeName>
    <alternativeName>
        <fullName evidence="7">RING-type E3 ubiquitin transferase isomerase 4</fullName>
    </alternativeName>
    <alternativeName>
        <fullName>Rotamase 4</fullName>
    </alternativeName>
</protein>
<comment type="function">
    <text evidence="1 3 5 6">May catalyze the cis-trans isomerization of proline imidic peptide bonds in oligopeptides thereby assisting the folding of proteins. May also function as a chaperone, playing a role in intracellular transport of proteins. May also have a protein ubiquitin ligase activity acting as an E3 ubiquitin protein ligase or as a ubiquitin-ubiquitin ligase promoting elongation of ubiquitin chains on proteins. Influences the hermaphrodite switch from spermatogenesis to oogenesis. Required for body wall muscle cell development.</text>
</comment>
<comment type="catalytic activity">
    <reaction>
        <text>[protein]-peptidylproline (omega=180) = [protein]-peptidylproline (omega=0)</text>
        <dbReference type="Rhea" id="RHEA:16237"/>
        <dbReference type="Rhea" id="RHEA-COMP:10747"/>
        <dbReference type="Rhea" id="RHEA-COMP:10748"/>
        <dbReference type="ChEBI" id="CHEBI:83833"/>
        <dbReference type="ChEBI" id="CHEBI:83834"/>
        <dbReference type="EC" id="5.2.1.8"/>
    </reaction>
</comment>
<comment type="catalytic activity">
    <reaction evidence="3">
        <text>S-ubiquitinyl-[E2 ubiquitin-conjugating enzyme]-L-cysteine + [acceptor protein]-L-lysine = [E2 ubiquitin-conjugating enzyme]-L-cysteine + N(6)-ubiquitinyl-[acceptor protein]-L-lysine.</text>
        <dbReference type="EC" id="2.3.2.27"/>
    </reaction>
</comment>
<comment type="pathway">
    <text evidence="3">Protein modification; protein ubiquitination.</text>
</comment>
<comment type="subunit">
    <text>Interacts with mep-1.</text>
</comment>
<comment type="interaction">
    <interactant intactId="EBI-3513766">
        <id>P52012</id>
    </interactant>
    <interactant intactId="EBI-319858">
        <id>Q21502</id>
        <label>mep-1</label>
    </interactant>
    <organismsDiffer>false</organismsDiffer>
    <experiments>3</experiments>
</comment>
<comment type="subcellular location">
    <subcellularLocation>
        <location evidence="2 3">Nucleus</location>
    </subcellularLocation>
</comment>
<comment type="tissue specificity">
    <text evidence="6">Exclusively in the larval body wall striated muscle cells.</text>
</comment>
<comment type="developmental stage">
    <text evidence="6">Abundantly expressed in the early larval stages with lower levels at later larval and adult stages.</text>
</comment>
<comment type="similarity">
    <text evidence="7">Belongs to the cyclophilin-type PPIase family. PPIL2 subfamily.</text>
</comment>
<proteinExistence type="evidence at protein level"/>
<sequence length="523" mass="58534">MGKKQHQKDKLYLTTSEWKSIGGHKDDTGTRLQRAQFKRLPINHCSLSLLPFEDPVCARSGEIFDLTAIVPYLKKHGKNPCTGKPLVAKDLIHLKFDKGEDGKFRCPVTFRTFTDHSHILAIATSGNVYSHEAVQELNLKRNHLKDLLTDVPFTRADIIDLQDPNHLEKFNMEQFLHVKLDLKTSEEIKKEKDAMKDPKFYIRRMNNACKSVLDQLDKEYVPKKSSTETDETADEINAAHYSQGKVAAGFTSTVMAPVTSNKAAVLDNDTVRYSRVKKNAFVRLVTNFGPLNLELFAPKVPKACENFITHCSNGYYNNTKFHRLIKNFMLQGGDPTGTGHGGESIWDKPFSDEFISGFSHDARGVLSMANKGSNTNGSQFFITFRPCKYLDRKHTIFGRLVGGQDTLTTIEKLETEEGTDVPMVSVVIMRAEVFVDPFEEAEKEVQAERAEILKKTSKDAASLANKKAKETATKPEAVGTGVGKYMKSAAAVNKRQGKMEDVPLEAAKKTKFARAGLGDFSKW</sequence>
<accession>P52012</accession>
<accession>Q09548</accession>
<keyword id="KW-0217">Developmental protein</keyword>
<keyword id="KW-0221">Differentiation</keyword>
<keyword id="KW-0413">Isomerase</keyword>
<keyword id="KW-0539">Nucleus</keyword>
<keyword id="KW-1185">Reference proteome</keyword>
<keyword id="KW-0697">Rotamase</keyword>
<keyword id="KW-0726">Sexual differentiation</keyword>
<keyword id="KW-0808">Transferase</keyword>
<keyword id="KW-0833">Ubl conjugation pathway</keyword>
<name>PPIL2_CAEEL</name>
<gene>
    <name type="primary">cyn-4</name>
    <name type="synonym">cyp-4</name>
    <name type="synonym">mog-6</name>
    <name type="ORF">F59E10.2</name>
</gene>